<organism>
    <name type="scientific">Clostridium botulinum (strain Alaska E43 / Type E3)</name>
    <dbReference type="NCBI Taxonomy" id="508767"/>
    <lineage>
        <taxon>Bacteria</taxon>
        <taxon>Bacillati</taxon>
        <taxon>Bacillota</taxon>
        <taxon>Clostridia</taxon>
        <taxon>Eubacteriales</taxon>
        <taxon>Clostridiaceae</taxon>
        <taxon>Clostridium</taxon>
    </lineage>
</organism>
<proteinExistence type="inferred from homology"/>
<comment type="function">
    <text evidence="1">This protein is involved in the repair of mismatches in DNA. It is possible that it carries out the mismatch recognition step. This protein has a weak ATPase activity.</text>
</comment>
<comment type="similarity">
    <text evidence="1">Belongs to the DNA mismatch repair MutS family.</text>
</comment>
<keyword id="KW-0067">ATP-binding</keyword>
<keyword id="KW-0227">DNA damage</keyword>
<keyword id="KW-0234">DNA repair</keyword>
<keyword id="KW-0238">DNA-binding</keyword>
<keyword id="KW-0547">Nucleotide-binding</keyword>
<feature type="chain" id="PRO_1000093618" description="DNA mismatch repair protein MutS">
    <location>
        <begin position="1"/>
        <end position="941"/>
    </location>
</feature>
<feature type="binding site" evidence="1">
    <location>
        <begin position="613"/>
        <end position="620"/>
    </location>
    <ligand>
        <name>ATP</name>
        <dbReference type="ChEBI" id="CHEBI:30616"/>
    </ligand>
</feature>
<reference key="1">
    <citation type="submission" date="2008-05" db="EMBL/GenBank/DDBJ databases">
        <title>Complete genome sequence of Clostridium botulinum E3 str. Alaska E43.</title>
        <authorList>
            <person name="Brinkac L.M."/>
            <person name="Brown J.L."/>
            <person name="Bruce D."/>
            <person name="Detter C."/>
            <person name="Munk C."/>
            <person name="Smith L.A."/>
            <person name="Smith T.J."/>
            <person name="Sutton G."/>
            <person name="Brettin T.S."/>
        </authorList>
    </citation>
    <scope>NUCLEOTIDE SEQUENCE [LARGE SCALE GENOMIC DNA]</scope>
    <source>
        <strain>Alaska E43 / Type E3</strain>
    </source>
</reference>
<name>MUTS_CLOBA</name>
<sequence>MALTPMMVEYMKTKEEYNDCILFYRLGDFYEMFFDDALTVSRELELVLTGKNCGLEERAPMCGIPHHAAAAYIPRLVTKGYKVAICEQLEDPKQSKGIVKRGVVKVITPGTFIDSNSNLENDNTYLMVISEHEDKFGIAMSDISTGEFKTTSFNNIKMSLLDEISKVSPKEILVDNNISEDLLEEINNVLPVLITKKDFNEFLVSKEELIEQFSDLEVSGLTIEREIPSKVLLKYINETQKMSLTNINLLEQYEIINYMTIDGNSRRNLELTESIREKTKKGSLLWVLDKSATSMGGRTLRKWIDEPLIVKDEIEKRLSGVEEVFNSIGFNEDLRSALKEIYDIERIVGKISNKNVNAKDLLSLKSSLDKLPCIKKLLKDTSSELLKGYYENLDELIDVRDLLNDSIKEDPGLGLKEGNIIKDGYNNLVDELRQSKLHGKEWIAALENREREFTGIKSLKVGYNKVFGYYIEISKSNYNSIPEGRYIRKQTLANAERFITEELKVMEDKILGSEEKLINLEYSIFVEIRDKIEKEISRLKKSARIISDLDGISTLALVALENDYIKPEINTNGLIKITDGRHPVVEKVIGKGDFVSNNTALNQTDKELLLITGPNMAGKSTYMRQVALITLMAQMGSFVPATSANISICDKIFTRIGASDDLAGGKSTFMVEMWEVSNILKNATSNSLVLLDEVGRGTSTYDGLSIAWSVIEYITKNKNLRCKTLFATHYHELVKLEGILPGVKNYSVAVKKLKDSVVFLRKIVEGGADESYGIEVAKLAGLPENVINRAREILEDLESKNTFDINKLSSCSMVSNNTKEIAADSIKNEEDKVISNAQNIDVNETNCNYNEEKILKIETQNSEYEETIKFLKSEIKELQESNKKHNKKHKDASNDNMQINFEVMEKENFIKEISDVDILNLNPMEAMNTLYKVVTDAKKLQ</sequence>
<protein>
    <recommendedName>
        <fullName evidence="1">DNA mismatch repair protein MutS</fullName>
    </recommendedName>
</protein>
<accession>B2V1M2</accession>
<evidence type="ECO:0000255" key="1">
    <source>
        <dbReference type="HAMAP-Rule" id="MF_00096"/>
    </source>
</evidence>
<gene>
    <name evidence="1" type="primary">mutS</name>
    <name type="ordered locus">CLH_1684</name>
</gene>
<dbReference type="EMBL" id="CP001078">
    <property type="protein sequence ID" value="ACD53561.1"/>
    <property type="molecule type" value="Genomic_DNA"/>
</dbReference>
<dbReference type="RefSeq" id="WP_012451434.1">
    <property type="nucleotide sequence ID" value="NC_010723.1"/>
</dbReference>
<dbReference type="SMR" id="B2V1M2"/>
<dbReference type="KEGG" id="cbt:CLH_1684"/>
<dbReference type="HOGENOM" id="CLU_002472_4_0_9"/>
<dbReference type="GO" id="GO:0005829">
    <property type="term" value="C:cytosol"/>
    <property type="evidence" value="ECO:0007669"/>
    <property type="project" value="TreeGrafter"/>
</dbReference>
<dbReference type="GO" id="GO:0005524">
    <property type="term" value="F:ATP binding"/>
    <property type="evidence" value="ECO:0007669"/>
    <property type="project" value="UniProtKB-UniRule"/>
</dbReference>
<dbReference type="GO" id="GO:0140664">
    <property type="term" value="F:ATP-dependent DNA damage sensor activity"/>
    <property type="evidence" value="ECO:0007669"/>
    <property type="project" value="InterPro"/>
</dbReference>
<dbReference type="GO" id="GO:0003684">
    <property type="term" value="F:damaged DNA binding"/>
    <property type="evidence" value="ECO:0007669"/>
    <property type="project" value="UniProtKB-UniRule"/>
</dbReference>
<dbReference type="GO" id="GO:0030983">
    <property type="term" value="F:mismatched DNA binding"/>
    <property type="evidence" value="ECO:0007669"/>
    <property type="project" value="InterPro"/>
</dbReference>
<dbReference type="GO" id="GO:0006298">
    <property type="term" value="P:mismatch repair"/>
    <property type="evidence" value="ECO:0007669"/>
    <property type="project" value="UniProtKB-UniRule"/>
</dbReference>
<dbReference type="CDD" id="cd03284">
    <property type="entry name" value="ABC_MutS1"/>
    <property type="match status" value="1"/>
</dbReference>
<dbReference type="FunFam" id="1.10.1420.10:FF:000007">
    <property type="entry name" value="DNA mismatch repair protein MutS"/>
    <property type="match status" value="1"/>
</dbReference>
<dbReference type="FunFam" id="3.40.1170.10:FF:000001">
    <property type="entry name" value="DNA mismatch repair protein MutS"/>
    <property type="match status" value="1"/>
</dbReference>
<dbReference type="FunFam" id="3.40.50.300:FF:001579">
    <property type="entry name" value="DNA mismatch repair protein MutS"/>
    <property type="match status" value="1"/>
</dbReference>
<dbReference type="Gene3D" id="1.10.1420.10">
    <property type="match status" value="2"/>
</dbReference>
<dbReference type="Gene3D" id="3.40.1170.10">
    <property type="entry name" value="DNA repair protein MutS, domain I"/>
    <property type="match status" value="1"/>
</dbReference>
<dbReference type="Gene3D" id="3.30.420.110">
    <property type="entry name" value="MutS, connector domain"/>
    <property type="match status" value="1"/>
</dbReference>
<dbReference type="Gene3D" id="3.40.50.300">
    <property type="entry name" value="P-loop containing nucleotide triphosphate hydrolases"/>
    <property type="match status" value="1"/>
</dbReference>
<dbReference type="HAMAP" id="MF_00096">
    <property type="entry name" value="MutS"/>
    <property type="match status" value="1"/>
</dbReference>
<dbReference type="InterPro" id="IPR005748">
    <property type="entry name" value="DNA_mismatch_repair_MutS"/>
</dbReference>
<dbReference type="InterPro" id="IPR007695">
    <property type="entry name" value="DNA_mismatch_repair_MutS-lik_N"/>
</dbReference>
<dbReference type="InterPro" id="IPR017261">
    <property type="entry name" value="DNA_mismatch_repair_MutS/MSH"/>
</dbReference>
<dbReference type="InterPro" id="IPR000432">
    <property type="entry name" value="DNA_mismatch_repair_MutS_C"/>
</dbReference>
<dbReference type="InterPro" id="IPR007861">
    <property type="entry name" value="DNA_mismatch_repair_MutS_clamp"/>
</dbReference>
<dbReference type="InterPro" id="IPR007696">
    <property type="entry name" value="DNA_mismatch_repair_MutS_core"/>
</dbReference>
<dbReference type="InterPro" id="IPR016151">
    <property type="entry name" value="DNA_mismatch_repair_MutS_N"/>
</dbReference>
<dbReference type="InterPro" id="IPR036187">
    <property type="entry name" value="DNA_mismatch_repair_MutS_sf"/>
</dbReference>
<dbReference type="InterPro" id="IPR007860">
    <property type="entry name" value="DNA_mmatch_repair_MutS_con_dom"/>
</dbReference>
<dbReference type="InterPro" id="IPR045076">
    <property type="entry name" value="MutS"/>
</dbReference>
<dbReference type="InterPro" id="IPR036678">
    <property type="entry name" value="MutS_con_dom_sf"/>
</dbReference>
<dbReference type="InterPro" id="IPR027417">
    <property type="entry name" value="P-loop_NTPase"/>
</dbReference>
<dbReference type="NCBIfam" id="TIGR01070">
    <property type="entry name" value="mutS1"/>
    <property type="match status" value="1"/>
</dbReference>
<dbReference type="NCBIfam" id="NF003810">
    <property type="entry name" value="PRK05399.1"/>
    <property type="match status" value="1"/>
</dbReference>
<dbReference type="PANTHER" id="PTHR11361:SF34">
    <property type="entry name" value="DNA MISMATCH REPAIR PROTEIN MSH1, MITOCHONDRIAL"/>
    <property type="match status" value="1"/>
</dbReference>
<dbReference type="PANTHER" id="PTHR11361">
    <property type="entry name" value="DNA MISMATCH REPAIR PROTEIN MUTS FAMILY MEMBER"/>
    <property type="match status" value="1"/>
</dbReference>
<dbReference type="Pfam" id="PF01624">
    <property type="entry name" value="MutS_I"/>
    <property type="match status" value="1"/>
</dbReference>
<dbReference type="Pfam" id="PF05188">
    <property type="entry name" value="MutS_II"/>
    <property type="match status" value="1"/>
</dbReference>
<dbReference type="Pfam" id="PF05192">
    <property type="entry name" value="MutS_III"/>
    <property type="match status" value="1"/>
</dbReference>
<dbReference type="Pfam" id="PF05190">
    <property type="entry name" value="MutS_IV"/>
    <property type="match status" value="1"/>
</dbReference>
<dbReference type="Pfam" id="PF00488">
    <property type="entry name" value="MutS_V"/>
    <property type="match status" value="1"/>
</dbReference>
<dbReference type="PIRSF" id="PIRSF037677">
    <property type="entry name" value="DNA_mis_repair_Msh6"/>
    <property type="match status" value="1"/>
</dbReference>
<dbReference type="SMART" id="SM00534">
    <property type="entry name" value="MUTSac"/>
    <property type="match status" value="1"/>
</dbReference>
<dbReference type="SMART" id="SM00533">
    <property type="entry name" value="MUTSd"/>
    <property type="match status" value="1"/>
</dbReference>
<dbReference type="SUPFAM" id="SSF55271">
    <property type="entry name" value="DNA repair protein MutS, domain I"/>
    <property type="match status" value="1"/>
</dbReference>
<dbReference type="SUPFAM" id="SSF53150">
    <property type="entry name" value="DNA repair protein MutS, domain II"/>
    <property type="match status" value="1"/>
</dbReference>
<dbReference type="SUPFAM" id="SSF48334">
    <property type="entry name" value="DNA repair protein MutS, domain III"/>
    <property type="match status" value="1"/>
</dbReference>
<dbReference type="SUPFAM" id="SSF52540">
    <property type="entry name" value="P-loop containing nucleoside triphosphate hydrolases"/>
    <property type="match status" value="1"/>
</dbReference>
<dbReference type="PROSITE" id="PS00486">
    <property type="entry name" value="DNA_MISMATCH_REPAIR_2"/>
    <property type="match status" value="1"/>
</dbReference>